<keyword id="KW-0963">Cytoplasm</keyword>
<keyword id="KW-0227">DNA damage</keyword>
<keyword id="KW-0228">DNA excision</keyword>
<keyword id="KW-0234">DNA repair</keyword>
<keyword id="KW-0267">Excision nuclease</keyword>
<keyword id="KW-1185">Reference proteome</keyword>
<keyword id="KW-0742">SOS response</keyword>
<accession>A1AC65</accession>
<comment type="function">
    <text evidence="1">The UvrABC repair system catalyzes the recognition and processing of DNA lesions. UvrC both incises the 5' and 3' sides of the lesion. The N-terminal half is responsible for the 3' incision and the C-terminal half is responsible for the 5' incision.</text>
</comment>
<comment type="subunit">
    <text evidence="1">Interacts with UvrB in an incision complex.</text>
</comment>
<comment type="subcellular location">
    <subcellularLocation>
        <location evidence="1">Cytoplasm</location>
    </subcellularLocation>
</comment>
<comment type="similarity">
    <text evidence="1">Belongs to the UvrC family.</text>
</comment>
<dbReference type="EMBL" id="CP000468">
    <property type="protein sequence ID" value="ABJ01255.1"/>
    <property type="molecule type" value="Genomic_DNA"/>
</dbReference>
<dbReference type="RefSeq" id="WP_001283434.1">
    <property type="nucleotide sequence ID" value="NZ_CADILS010000028.1"/>
</dbReference>
<dbReference type="SMR" id="A1AC65"/>
<dbReference type="KEGG" id="ecv:APECO1_955"/>
<dbReference type="HOGENOM" id="CLU_014841_3_0_6"/>
<dbReference type="Proteomes" id="UP000008216">
    <property type="component" value="Chromosome"/>
</dbReference>
<dbReference type="GO" id="GO:0005737">
    <property type="term" value="C:cytoplasm"/>
    <property type="evidence" value="ECO:0007669"/>
    <property type="project" value="UniProtKB-SubCell"/>
</dbReference>
<dbReference type="GO" id="GO:0009380">
    <property type="term" value="C:excinuclease repair complex"/>
    <property type="evidence" value="ECO:0007669"/>
    <property type="project" value="InterPro"/>
</dbReference>
<dbReference type="GO" id="GO:0003677">
    <property type="term" value="F:DNA binding"/>
    <property type="evidence" value="ECO:0007669"/>
    <property type="project" value="UniProtKB-UniRule"/>
</dbReference>
<dbReference type="GO" id="GO:0009381">
    <property type="term" value="F:excinuclease ABC activity"/>
    <property type="evidence" value="ECO:0007669"/>
    <property type="project" value="UniProtKB-UniRule"/>
</dbReference>
<dbReference type="GO" id="GO:0006289">
    <property type="term" value="P:nucleotide-excision repair"/>
    <property type="evidence" value="ECO:0007669"/>
    <property type="project" value="UniProtKB-UniRule"/>
</dbReference>
<dbReference type="GO" id="GO:0009432">
    <property type="term" value="P:SOS response"/>
    <property type="evidence" value="ECO:0007669"/>
    <property type="project" value="UniProtKB-UniRule"/>
</dbReference>
<dbReference type="CDD" id="cd10434">
    <property type="entry name" value="GIY-YIG_UvrC_Cho"/>
    <property type="match status" value="1"/>
</dbReference>
<dbReference type="FunFam" id="1.10.150.20:FF:000005">
    <property type="entry name" value="UvrABC system protein C"/>
    <property type="match status" value="1"/>
</dbReference>
<dbReference type="FunFam" id="3.30.420.340:FF:000001">
    <property type="entry name" value="UvrABC system protein C"/>
    <property type="match status" value="1"/>
</dbReference>
<dbReference type="FunFam" id="3.40.1440.10:FF:000001">
    <property type="entry name" value="UvrABC system protein C"/>
    <property type="match status" value="1"/>
</dbReference>
<dbReference type="FunFam" id="4.10.860.10:FF:000002">
    <property type="entry name" value="UvrABC system protein C"/>
    <property type="match status" value="1"/>
</dbReference>
<dbReference type="Gene3D" id="1.10.150.20">
    <property type="entry name" value="5' to 3' exonuclease, C-terminal subdomain"/>
    <property type="match status" value="1"/>
</dbReference>
<dbReference type="Gene3D" id="3.40.1440.10">
    <property type="entry name" value="GIY-YIG endonuclease"/>
    <property type="match status" value="1"/>
</dbReference>
<dbReference type="Gene3D" id="4.10.860.10">
    <property type="entry name" value="UVR domain"/>
    <property type="match status" value="1"/>
</dbReference>
<dbReference type="Gene3D" id="3.30.420.340">
    <property type="entry name" value="UvrC, RNAse H endonuclease domain"/>
    <property type="match status" value="1"/>
</dbReference>
<dbReference type="HAMAP" id="MF_00203">
    <property type="entry name" value="UvrC"/>
    <property type="match status" value="1"/>
</dbReference>
<dbReference type="InterPro" id="IPR000305">
    <property type="entry name" value="GIY-YIG_endonuc"/>
</dbReference>
<dbReference type="InterPro" id="IPR035901">
    <property type="entry name" value="GIY-YIG_endonuc_sf"/>
</dbReference>
<dbReference type="InterPro" id="IPR047296">
    <property type="entry name" value="GIY-YIG_UvrC_Cho"/>
</dbReference>
<dbReference type="InterPro" id="IPR003583">
    <property type="entry name" value="Hlx-hairpin-Hlx_DNA-bd_motif"/>
</dbReference>
<dbReference type="InterPro" id="IPR010994">
    <property type="entry name" value="RuvA_2-like"/>
</dbReference>
<dbReference type="InterPro" id="IPR001943">
    <property type="entry name" value="UVR_dom"/>
</dbReference>
<dbReference type="InterPro" id="IPR036876">
    <property type="entry name" value="UVR_dom_sf"/>
</dbReference>
<dbReference type="InterPro" id="IPR050066">
    <property type="entry name" value="UvrABC_protein_C"/>
</dbReference>
<dbReference type="InterPro" id="IPR004791">
    <property type="entry name" value="UvrC"/>
</dbReference>
<dbReference type="InterPro" id="IPR001162">
    <property type="entry name" value="UvrC_RNase_H_dom"/>
</dbReference>
<dbReference type="InterPro" id="IPR038476">
    <property type="entry name" value="UvrC_RNase_H_dom_sf"/>
</dbReference>
<dbReference type="NCBIfam" id="NF001824">
    <property type="entry name" value="PRK00558.1-5"/>
    <property type="match status" value="1"/>
</dbReference>
<dbReference type="NCBIfam" id="TIGR00194">
    <property type="entry name" value="uvrC"/>
    <property type="match status" value="1"/>
</dbReference>
<dbReference type="PANTHER" id="PTHR30562:SF1">
    <property type="entry name" value="UVRABC SYSTEM PROTEIN C"/>
    <property type="match status" value="1"/>
</dbReference>
<dbReference type="PANTHER" id="PTHR30562">
    <property type="entry name" value="UVRC/OXIDOREDUCTASE"/>
    <property type="match status" value="1"/>
</dbReference>
<dbReference type="Pfam" id="PF01541">
    <property type="entry name" value="GIY-YIG"/>
    <property type="match status" value="1"/>
</dbReference>
<dbReference type="Pfam" id="PF14520">
    <property type="entry name" value="HHH_5"/>
    <property type="match status" value="1"/>
</dbReference>
<dbReference type="Pfam" id="PF02151">
    <property type="entry name" value="UVR"/>
    <property type="match status" value="1"/>
</dbReference>
<dbReference type="Pfam" id="PF22920">
    <property type="entry name" value="UvrC_RNaseH"/>
    <property type="match status" value="1"/>
</dbReference>
<dbReference type="Pfam" id="PF08459">
    <property type="entry name" value="UvrC_RNaseH_dom"/>
    <property type="match status" value="1"/>
</dbReference>
<dbReference type="SMART" id="SM00465">
    <property type="entry name" value="GIYc"/>
    <property type="match status" value="1"/>
</dbReference>
<dbReference type="SMART" id="SM00278">
    <property type="entry name" value="HhH1"/>
    <property type="match status" value="2"/>
</dbReference>
<dbReference type="SUPFAM" id="SSF46600">
    <property type="entry name" value="C-terminal UvrC-binding domain of UvrB"/>
    <property type="match status" value="1"/>
</dbReference>
<dbReference type="SUPFAM" id="SSF82771">
    <property type="entry name" value="GIY-YIG endonuclease"/>
    <property type="match status" value="1"/>
</dbReference>
<dbReference type="SUPFAM" id="SSF47781">
    <property type="entry name" value="RuvA domain 2-like"/>
    <property type="match status" value="1"/>
</dbReference>
<dbReference type="PROSITE" id="PS50164">
    <property type="entry name" value="GIY_YIG"/>
    <property type="match status" value="1"/>
</dbReference>
<dbReference type="PROSITE" id="PS50151">
    <property type="entry name" value="UVR"/>
    <property type="match status" value="1"/>
</dbReference>
<dbReference type="PROSITE" id="PS50165">
    <property type="entry name" value="UVRC"/>
    <property type="match status" value="1"/>
</dbReference>
<sequence length="610" mass="68232">MSDQFDAKAFLKTVTSQPGVYRMYDAGGTVIYVGKAKDLKKRLSSYFRSNLASRKTEALVAQIQQIDVTVTHTETEALLLEHNYIKLYQPRYNVLLRDDKSYPFIFLSGDTHPRLAMHRGAKHAKGEYFGPFPNGYAVRETLALLQKIFPIRQCENSVYRNRSRPCLQYQIGRCLGPCVEGLVSEEEYAQQVEYVRLFLSGKDDQVLTQLISRMETASQNLEFEEAARIRDQIQAVRRVTEKQFVSNTGDDLDVIGVAFDAGMACVHVLFIRQGKVLGSRSYFPKVPGSTELSEVVETFVGQFYLQGSQMRTLPGEILLDFNLSDKTLLADSLSELAGRKINVQTKPRGDRARYLKLARTNAATALTSKLSQQSTVHQRLTALASVLKLPEVKRMECFDISHTMGEQTVASCVVFDANGPLRAEYRRYNITGITPGDDYAAMNQVLRRRYGKAIDDSKIPDVILIDGGKGQLAQAKNVFAELDVSWDKNHPLLLGVAKGADRKAGLETLFFEPEGEGFSLPPDSPALHVIQHIRDESHDHAIGGHRKKRAKVKNTSSLETIEGIGPKRRQMLLKYMGGLQGLRNASVEEIAKVPGISQGLAEKIFWSLKH</sequence>
<name>UVRC_ECOK1</name>
<gene>
    <name evidence="1" type="primary">uvrC</name>
    <name type="ordered locus">Ecok1_17610</name>
    <name type="ORF">APECO1_955</name>
</gene>
<reference key="1">
    <citation type="journal article" date="2007" name="J. Bacteriol.">
        <title>The genome sequence of avian pathogenic Escherichia coli strain O1:K1:H7 shares strong similarities with human extraintestinal pathogenic E. coli genomes.</title>
        <authorList>
            <person name="Johnson T.J."/>
            <person name="Kariyawasam S."/>
            <person name="Wannemuehler Y."/>
            <person name="Mangiamele P."/>
            <person name="Johnson S.J."/>
            <person name="Doetkott C."/>
            <person name="Skyberg J.A."/>
            <person name="Lynne A.M."/>
            <person name="Johnson J.R."/>
            <person name="Nolan L.K."/>
        </authorList>
    </citation>
    <scope>NUCLEOTIDE SEQUENCE [LARGE SCALE GENOMIC DNA]</scope>
</reference>
<feature type="chain" id="PRO_1000077782" description="UvrABC system protein C">
    <location>
        <begin position="1"/>
        <end position="610"/>
    </location>
</feature>
<feature type="domain" description="GIY-YIG" evidence="1">
    <location>
        <begin position="16"/>
        <end position="94"/>
    </location>
</feature>
<feature type="domain" description="UVR" evidence="1">
    <location>
        <begin position="204"/>
        <end position="239"/>
    </location>
</feature>
<organism>
    <name type="scientific">Escherichia coli O1:K1 / APEC</name>
    <dbReference type="NCBI Taxonomy" id="405955"/>
    <lineage>
        <taxon>Bacteria</taxon>
        <taxon>Pseudomonadati</taxon>
        <taxon>Pseudomonadota</taxon>
        <taxon>Gammaproteobacteria</taxon>
        <taxon>Enterobacterales</taxon>
        <taxon>Enterobacteriaceae</taxon>
        <taxon>Escherichia</taxon>
    </lineage>
</organism>
<proteinExistence type="inferred from homology"/>
<protein>
    <recommendedName>
        <fullName evidence="1">UvrABC system protein C</fullName>
        <shortName evidence="1">Protein UvrC</shortName>
    </recommendedName>
    <alternativeName>
        <fullName evidence="1">Excinuclease ABC subunit C</fullName>
    </alternativeName>
</protein>
<evidence type="ECO:0000255" key="1">
    <source>
        <dbReference type="HAMAP-Rule" id="MF_00203"/>
    </source>
</evidence>